<proteinExistence type="inferred from homology"/>
<name>RUTD_CAUSK</name>
<evidence type="ECO:0000255" key="1">
    <source>
        <dbReference type="HAMAP-Rule" id="MF_00832"/>
    </source>
</evidence>
<reference key="1">
    <citation type="submission" date="2008-01" db="EMBL/GenBank/DDBJ databases">
        <title>Complete sequence of chromosome of Caulobacter sp. K31.</title>
        <authorList>
            <consortium name="US DOE Joint Genome Institute"/>
            <person name="Copeland A."/>
            <person name="Lucas S."/>
            <person name="Lapidus A."/>
            <person name="Barry K."/>
            <person name="Glavina del Rio T."/>
            <person name="Dalin E."/>
            <person name="Tice H."/>
            <person name="Pitluck S."/>
            <person name="Bruce D."/>
            <person name="Goodwin L."/>
            <person name="Thompson L.S."/>
            <person name="Brettin T."/>
            <person name="Detter J.C."/>
            <person name="Han C."/>
            <person name="Schmutz J."/>
            <person name="Larimer F."/>
            <person name="Land M."/>
            <person name="Hauser L."/>
            <person name="Kyrpides N."/>
            <person name="Kim E."/>
            <person name="Stephens C."/>
            <person name="Richardson P."/>
        </authorList>
    </citation>
    <scope>NUCLEOTIDE SEQUENCE [LARGE SCALE GENOMIC DNA]</scope>
    <source>
        <strain>K31</strain>
    </source>
</reference>
<comment type="function">
    <text evidence="1">Involved in pyrimidine catabolism. May facilitate the hydrolysis of carbamate, a reaction that can also occur spontaneously.</text>
</comment>
<comment type="catalytic activity">
    <reaction evidence="1">
        <text>carbamate + 2 H(+) = NH4(+) + CO2</text>
        <dbReference type="Rhea" id="RHEA:15649"/>
        <dbReference type="ChEBI" id="CHEBI:13941"/>
        <dbReference type="ChEBI" id="CHEBI:15378"/>
        <dbReference type="ChEBI" id="CHEBI:16526"/>
        <dbReference type="ChEBI" id="CHEBI:28938"/>
    </reaction>
</comment>
<comment type="similarity">
    <text evidence="1">Belongs to the AB hydrolase superfamily. Hydrolase RutD family.</text>
</comment>
<organism>
    <name type="scientific">Caulobacter sp. (strain K31)</name>
    <dbReference type="NCBI Taxonomy" id="366602"/>
    <lineage>
        <taxon>Bacteria</taxon>
        <taxon>Pseudomonadati</taxon>
        <taxon>Pseudomonadota</taxon>
        <taxon>Alphaproteobacteria</taxon>
        <taxon>Caulobacterales</taxon>
        <taxon>Caulobacteraceae</taxon>
        <taxon>Caulobacter</taxon>
    </lineage>
</organism>
<keyword id="KW-0378">Hydrolase</keyword>
<feature type="chain" id="PRO_0000402931" description="Putative carbamate hydrolase RutD">
    <location>
        <begin position="1"/>
        <end position="268"/>
    </location>
</feature>
<feature type="domain" description="AB hydrolase-1" evidence="1">
    <location>
        <begin position="24"/>
        <end position="243"/>
    </location>
</feature>
<accession>B0SW62</accession>
<dbReference type="EC" id="3.5.1.-" evidence="1"/>
<dbReference type="EMBL" id="CP000927">
    <property type="protein sequence ID" value="ABZ73106.1"/>
    <property type="molecule type" value="Genomic_DNA"/>
</dbReference>
<dbReference type="SMR" id="B0SW62"/>
<dbReference type="STRING" id="366602.Caul_3981"/>
<dbReference type="ESTHER" id="9caul-q0lxe3">
    <property type="family name" value="RutD"/>
</dbReference>
<dbReference type="KEGG" id="cak:Caul_3981"/>
<dbReference type="eggNOG" id="COG2021">
    <property type="taxonomic scope" value="Bacteria"/>
</dbReference>
<dbReference type="HOGENOM" id="CLU_020336_50_1_5"/>
<dbReference type="OrthoDB" id="9801400at2"/>
<dbReference type="GO" id="GO:0016020">
    <property type="term" value="C:membrane"/>
    <property type="evidence" value="ECO:0007669"/>
    <property type="project" value="TreeGrafter"/>
</dbReference>
<dbReference type="GO" id="GO:0016811">
    <property type="term" value="F:hydrolase activity, acting on carbon-nitrogen (but not peptide) bonds, in linear amides"/>
    <property type="evidence" value="ECO:0007669"/>
    <property type="project" value="InterPro"/>
</dbReference>
<dbReference type="GO" id="GO:0047372">
    <property type="term" value="F:monoacylglycerol lipase activity"/>
    <property type="evidence" value="ECO:0007669"/>
    <property type="project" value="TreeGrafter"/>
</dbReference>
<dbReference type="GO" id="GO:0046464">
    <property type="term" value="P:acylglycerol catabolic process"/>
    <property type="evidence" value="ECO:0007669"/>
    <property type="project" value="TreeGrafter"/>
</dbReference>
<dbReference type="GO" id="GO:0019740">
    <property type="term" value="P:nitrogen utilization"/>
    <property type="evidence" value="ECO:0007669"/>
    <property type="project" value="UniProtKB-UniRule"/>
</dbReference>
<dbReference type="GO" id="GO:0006212">
    <property type="term" value="P:uracil catabolic process"/>
    <property type="evidence" value="ECO:0007669"/>
    <property type="project" value="UniProtKB-UniRule"/>
</dbReference>
<dbReference type="Gene3D" id="3.40.50.1820">
    <property type="entry name" value="alpha/beta hydrolase"/>
    <property type="match status" value="1"/>
</dbReference>
<dbReference type="HAMAP" id="MF_00832">
    <property type="entry name" value="RutD"/>
    <property type="match status" value="1"/>
</dbReference>
<dbReference type="InterPro" id="IPR000073">
    <property type="entry name" value="AB_hydrolase_1"/>
</dbReference>
<dbReference type="InterPro" id="IPR029058">
    <property type="entry name" value="AB_hydrolase_fold"/>
</dbReference>
<dbReference type="InterPro" id="IPR050266">
    <property type="entry name" value="AB_hydrolase_sf"/>
</dbReference>
<dbReference type="InterPro" id="IPR019913">
    <property type="entry name" value="Pyrimidine_utilisation_RutD"/>
</dbReference>
<dbReference type="NCBIfam" id="TIGR03611">
    <property type="entry name" value="RutD"/>
    <property type="match status" value="1"/>
</dbReference>
<dbReference type="PANTHER" id="PTHR43798">
    <property type="entry name" value="MONOACYLGLYCEROL LIPASE"/>
    <property type="match status" value="1"/>
</dbReference>
<dbReference type="PANTHER" id="PTHR43798:SF5">
    <property type="entry name" value="MONOACYLGLYCEROL LIPASE ABHD6"/>
    <property type="match status" value="1"/>
</dbReference>
<dbReference type="Pfam" id="PF00561">
    <property type="entry name" value="Abhydrolase_1"/>
    <property type="match status" value="1"/>
</dbReference>
<dbReference type="PRINTS" id="PR00111">
    <property type="entry name" value="ABHYDROLASE"/>
</dbReference>
<dbReference type="SUPFAM" id="SSF53474">
    <property type="entry name" value="alpha/beta-Hydrolases"/>
    <property type="match status" value="1"/>
</dbReference>
<sequence length="268" mass="28884">MQSGTVDGLYHEVHGGPASDRQTVILSAGLGGSGTFWAPQMQALMSRFRVVLYDHRGTGRSARTLTDPHTVAAMGDDIVKLMDALGLERAHVVGHAAGGNAGLALALNHPDRLDKLVVVNGWSRPDPHIKRCFDTRLALLNDTGIAAYVHAQPLFLYPADWLSANNARLEAEEVHHINGFPSPDVMRTRIQALLEFDIDEDLETIRCPVLVSASADDMLVPLSCSRRLAERLPNATLDIAPWGGHGFTVTAPEAFNAAVLNFLSGEAA</sequence>
<gene>
    <name evidence="1" type="primary">rutD</name>
    <name type="ordered locus">Caul_3981</name>
</gene>
<protein>
    <recommendedName>
        <fullName evidence="1">Putative carbamate hydrolase RutD</fullName>
        <ecNumber evidence="1">3.5.1.-</ecNumber>
    </recommendedName>
    <alternativeName>
        <fullName evidence="1">Aminohydrolase</fullName>
    </alternativeName>
</protein>